<name>ATP8_CANGA</name>
<keyword id="KW-0066">ATP synthesis</keyword>
<keyword id="KW-0138">CF(0)</keyword>
<keyword id="KW-0375">Hydrogen ion transport</keyword>
<keyword id="KW-0406">Ion transport</keyword>
<keyword id="KW-0472">Membrane</keyword>
<keyword id="KW-0496">Mitochondrion</keyword>
<keyword id="KW-0812">Transmembrane</keyword>
<keyword id="KW-1133">Transmembrane helix</keyword>
<keyword id="KW-0813">Transport</keyword>
<comment type="function">
    <text evidence="1">Mitochondrial membrane ATP synthase (F(1)F(0) ATP synthase or Complex V) produces ATP from ADP in the presence of a proton gradient across the membrane which is generated by electron transport complexes of the respiratory chain. F-type ATPases consist of two structural domains, F(1) - containing the extramembraneous catalytic core and F(0) - containing the membrane proton channel, linked together by a central stalk and a peripheral stalk. During catalysis, ATP synthesis in the catalytic domain of F(1) is coupled via a rotary mechanism of the central stalk subunits to proton translocation. Part of the complex F(0) domain. Minor subunit located with subunit a in the membrane (By similarity).</text>
</comment>
<comment type="subunit">
    <text evidence="1">F-type ATPases have 2 components, CF(1) - the catalytic core - and CF(0) - the membrane proton channel.</text>
</comment>
<comment type="subcellular location">
    <subcellularLocation>
        <location>Mitochondrion membrane</location>
        <topology>Single-pass membrane protein</topology>
    </subcellularLocation>
</comment>
<comment type="similarity">
    <text evidence="3">Belongs to the ATPase protein 8 family.</text>
</comment>
<gene>
    <name type="primary">ATP8</name>
</gene>
<geneLocation type="mitochondrion"/>
<protein>
    <recommendedName>
        <fullName>ATP synthase protein 8</fullName>
    </recommendedName>
    <alternativeName>
        <fullName>A6L</fullName>
    </alternativeName>
    <alternativeName>
        <fullName>F-ATPase subunit 8</fullName>
    </alternativeName>
</protein>
<dbReference type="EMBL" id="X02169">
    <property type="protein sequence ID" value="CAA26110.1"/>
    <property type="molecule type" value="Genomic_DNA"/>
</dbReference>
<dbReference type="EMBL" id="AJ511533">
    <property type="protein sequence ID" value="CAD54423.1"/>
    <property type="molecule type" value="Genomic_DNA"/>
</dbReference>
<dbReference type="PIR" id="S07188">
    <property type="entry name" value="S07188"/>
</dbReference>
<dbReference type="RefSeq" id="NP_818782.1">
    <property type="nucleotide sequence ID" value="NC_004691.1"/>
</dbReference>
<dbReference type="SMR" id="P05040"/>
<dbReference type="FunCoup" id="P05040">
    <property type="interactions" value="113"/>
</dbReference>
<dbReference type="STRING" id="284593.P05040"/>
<dbReference type="EnsemblFungi" id="CaglfMp08-T">
    <property type="protein sequence ID" value="CaglfMp08-T-p1"/>
    <property type="gene ID" value="CaglfMp08"/>
</dbReference>
<dbReference type="GeneID" id="807005"/>
<dbReference type="KEGG" id="cgr:807005"/>
<dbReference type="CGD" id="CAL0139462">
    <property type="gene designation" value="ATP8"/>
</dbReference>
<dbReference type="VEuPathDB" id="FungiDB:B1J91_Mp08"/>
<dbReference type="VEuPathDB" id="FungiDB:CaglfMp08"/>
<dbReference type="InParanoid" id="P05040"/>
<dbReference type="GO" id="GO:0005743">
    <property type="term" value="C:mitochondrial inner membrane"/>
    <property type="evidence" value="ECO:0007669"/>
    <property type="project" value="EnsemblFungi"/>
</dbReference>
<dbReference type="GO" id="GO:0045259">
    <property type="term" value="C:proton-transporting ATP synthase complex"/>
    <property type="evidence" value="ECO:0000266"/>
    <property type="project" value="CGD"/>
</dbReference>
<dbReference type="GO" id="GO:0046933">
    <property type="term" value="F:proton-transporting ATP synthase activity, rotational mechanism"/>
    <property type="evidence" value="ECO:0007669"/>
    <property type="project" value="EnsemblFungi"/>
</dbReference>
<dbReference type="GO" id="GO:0015986">
    <property type="term" value="P:proton motive force-driven ATP synthesis"/>
    <property type="evidence" value="ECO:0000266"/>
    <property type="project" value="CGD"/>
</dbReference>
<dbReference type="InterPro" id="IPR009230">
    <property type="entry name" value="ATP_synth_su8_fun"/>
</dbReference>
<dbReference type="PANTHER" id="PTHR36101">
    <property type="entry name" value="ATP SYNTHASE PROTEIN 8"/>
    <property type="match status" value="1"/>
</dbReference>
<dbReference type="PANTHER" id="PTHR36101:SF1">
    <property type="entry name" value="ATP SYNTHASE PROTEIN 8"/>
    <property type="match status" value="1"/>
</dbReference>
<dbReference type="Pfam" id="PF05933">
    <property type="entry name" value="Fun_ATP-synt_8"/>
    <property type="match status" value="1"/>
</dbReference>
<evidence type="ECO:0000250" key="1"/>
<evidence type="ECO:0000255" key="2"/>
<evidence type="ECO:0000305" key="3"/>
<accession>P05040</accession>
<proteinExistence type="inferred from homology"/>
<reference key="1">
    <citation type="journal article" date="1985" name="EMBO J.">
        <title>Location of transcriptional control signals and transfer RNA sequences in Torulopsis glabrata mitochondrial DNA.</title>
        <authorList>
            <person name="Clark-Walker G.D."/>
            <person name="McArthur C.R."/>
            <person name="Sriprakash K.S."/>
        </authorList>
    </citation>
    <scope>NUCLEOTIDE SEQUENCE [GENOMIC DNA]</scope>
</reference>
<reference key="2">
    <citation type="journal article" date="2003" name="FEBS Lett.">
        <title>The complete mitochondrial genome sequence of the pathogenic yeast Candida (Torulopsis) glabrata.</title>
        <authorList>
            <person name="Koszul R."/>
            <person name="Malpertuy A."/>
            <person name="Frangeul L."/>
            <person name="Bouchier C."/>
            <person name="Wincker P."/>
            <person name="Thierry A."/>
            <person name="Duthoy S."/>
            <person name="Ferris S."/>
            <person name="Hennequin C."/>
            <person name="Dujon B."/>
        </authorList>
    </citation>
    <scope>NUCLEOTIDE SEQUENCE [LARGE SCALE GENOMIC DNA]</scope>
    <source>
        <strain>ATCC 2001 / BCRC 20586 / JCM 3761 / NBRC 0622 / NRRL Y-65 / CBS 138</strain>
    </source>
</reference>
<feature type="chain" id="PRO_0000195597" description="ATP synthase protein 8">
    <location>
        <begin position="1"/>
        <end position="48"/>
    </location>
</feature>
<feature type="transmembrane region" description="Helical" evidence="2">
    <location>
        <begin position="12"/>
        <end position="32"/>
    </location>
</feature>
<organism>
    <name type="scientific">Candida glabrata (strain ATCC 2001 / BCRC 20586 / JCM 3761 / NBRC 0622 / NRRL Y-65 / CBS 138)</name>
    <name type="common">Yeast</name>
    <name type="synonym">Nakaseomyces glabratus</name>
    <dbReference type="NCBI Taxonomy" id="284593"/>
    <lineage>
        <taxon>Eukaryota</taxon>
        <taxon>Fungi</taxon>
        <taxon>Dikarya</taxon>
        <taxon>Ascomycota</taxon>
        <taxon>Saccharomycotina</taxon>
        <taxon>Saccharomycetes</taxon>
        <taxon>Saccharomycetales</taxon>
        <taxon>Saccharomycetaceae</taxon>
        <taxon>Nakaseomyces</taxon>
    </lineage>
</organism>
<sequence length="48" mass="5770">MPQLIPFYFMNQLTYGLLLITVLLILFSQFFLPMILRLYVSRLFISKL</sequence>